<feature type="chain" id="PRO_1000076348" description="Tryptophan synthase alpha chain">
    <location>
        <begin position="1"/>
        <end position="275"/>
    </location>
</feature>
<feature type="active site" description="Proton acceptor" evidence="1">
    <location>
        <position position="51"/>
    </location>
</feature>
<feature type="active site" description="Proton acceptor" evidence="1">
    <location>
        <position position="62"/>
    </location>
</feature>
<evidence type="ECO:0000255" key="1">
    <source>
        <dbReference type="HAMAP-Rule" id="MF_00131"/>
    </source>
</evidence>
<sequence length="275" mass="28399">MTKDRIDRRFAALKAENRAGFVTYIMAGDPDAATTLSVLKGLPAAGADLIELGFPFSDPMAEGPTIQRAAQRGLKSGMTLQGTLDLVAGFREGDADTPIILMGYLNPVLNRGFESFAAAAAKAGVDGLIIVDCPPEEAGPLTDALEAEGIALIRLAAPTTDDKRLPMVVRRTSGFVYYVSVAGVTGVKSADAADVAPAVARLRKASGLPVAVGFGIRTPAQAAAVARVADAAVVGSALVDEIEAAAQLNENVTEKVLLKASELAKAVRSARLELA</sequence>
<reference key="1">
    <citation type="submission" date="2008-01" db="EMBL/GenBank/DDBJ databases">
        <title>Complete sequence of chromosome of Caulobacter sp. K31.</title>
        <authorList>
            <consortium name="US DOE Joint Genome Institute"/>
            <person name="Copeland A."/>
            <person name="Lucas S."/>
            <person name="Lapidus A."/>
            <person name="Barry K."/>
            <person name="Glavina del Rio T."/>
            <person name="Dalin E."/>
            <person name="Tice H."/>
            <person name="Pitluck S."/>
            <person name="Bruce D."/>
            <person name="Goodwin L."/>
            <person name="Thompson L.S."/>
            <person name="Brettin T."/>
            <person name="Detter J.C."/>
            <person name="Han C."/>
            <person name="Schmutz J."/>
            <person name="Larimer F."/>
            <person name="Land M."/>
            <person name="Hauser L."/>
            <person name="Kyrpides N."/>
            <person name="Kim E."/>
            <person name="Stephens C."/>
            <person name="Richardson P."/>
        </authorList>
    </citation>
    <scope>NUCLEOTIDE SEQUENCE [LARGE SCALE GENOMIC DNA]</scope>
    <source>
        <strain>K31</strain>
    </source>
</reference>
<keyword id="KW-0028">Amino-acid biosynthesis</keyword>
<keyword id="KW-0057">Aromatic amino acid biosynthesis</keyword>
<keyword id="KW-0456">Lyase</keyword>
<keyword id="KW-0822">Tryptophan biosynthesis</keyword>
<comment type="function">
    <text evidence="1">The alpha subunit is responsible for the aldol cleavage of indoleglycerol phosphate to indole and glyceraldehyde 3-phosphate.</text>
</comment>
<comment type="catalytic activity">
    <reaction evidence="1">
        <text>(1S,2R)-1-C-(indol-3-yl)glycerol 3-phosphate + L-serine = D-glyceraldehyde 3-phosphate + L-tryptophan + H2O</text>
        <dbReference type="Rhea" id="RHEA:10532"/>
        <dbReference type="ChEBI" id="CHEBI:15377"/>
        <dbReference type="ChEBI" id="CHEBI:33384"/>
        <dbReference type="ChEBI" id="CHEBI:57912"/>
        <dbReference type="ChEBI" id="CHEBI:58866"/>
        <dbReference type="ChEBI" id="CHEBI:59776"/>
        <dbReference type="EC" id="4.2.1.20"/>
    </reaction>
</comment>
<comment type="pathway">
    <text evidence="1">Amino-acid biosynthesis; L-tryptophan biosynthesis; L-tryptophan from chorismate: step 5/5.</text>
</comment>
<comment type="subunit">
    <text evidence="1">Tetramer of two alpha and two beta chains.</text>
</comment>
<comment type="similarity">
    <text evidence="1">Belongs to the TrpA family.</text>
</comment>
<dbReference type="EC" id="4.2.1.20" evidence="1"/>
<dbReference type="EMBL" id="CP000927">
    <property type="protein sequence ID" value="ABZ74097.1"/>
    <property type="molecule type" value="Genomic_DNA"/>
</dbReference>
<dbReference type="SMR" id="B0T694"/>
<dbReference type="STRING" id="366602.Caul_4977"/>
<dbReference type="KEGG" id="cak:Caul_4977"/>
<dbReference type="eggNOG" id="COG0159">
    <property type="taxonomic scope" value="Bacteria"/>
</dbReference>
<dbReference type="HOGENOM" id="CLU_016734_0_0_5"/>
<dbReference type="OrthoDB" id="9804578at2"/>
<dbReference type="UniPathway" id="UPA00035">
    <property type="reaction ID" value="UER00044"/>
</dbReference>
<dbReference type="GO" id="GO:0005829">
    <property type="term" value="C:cytosol"/>
    <property type="evidence" value="ECO:0007669"/>
    <property type="project" value="TreeGrafter"/>
</dbReference>
<dbReference type="GO" id="GO:0004834">
    <property type="term" value="F:tryptophan synthase activity"/>
    <property type="evidence" value="ECO:0007669"/>
    <property type="project" value="UniProtKB-UniRule"/>
</dbReference>
<dbReference type="CDD" id="cd04724">
    <property type="entry name" value="Tryptophan_synthase_alpha"/>
    <property type="match status" value="1"/>
</dbReference>
<dbReference type="FunFam" id="3.20.20.70:FF:000037">
    <property type="entry name" value="Tryptophan synthase alpha chain"/>
    <property type="match status" value="1"/>
</dbReference>
<dbReference type="Gene3D" id="3.20.20.70">
    <property type="entry name" value="Aldolase class I"/>
    <property type="match status" value="1"/>
</dbReference>
<dbReference type="HAMAP" id="MF_00131">
    <property type="entry name" value="Trp_synth_alpha"/>
    <property type="match status" value="1"/>
</dbReference>
<dbReference type="InterPro" id="IPR013785">
    <property type="entry name" value="Aldolase_TIM"/>
</dbReference>
<dbReference type="InterPro" id="IPR011060">
    <property type="entry name" value="RibuloseP-bd_barrel"/>
</dbReference>
<dbReference type="InterPro" id="IPR018204">
    <property type="entry name" value="Trp_synthase_alpha_AS"/>
</dbReference>
<dbReference type="InterPro" id="IPR002028">
    <property type="entry name" value="Trp_synthase_suA"/>
</dbReference>
<dbReference type="NCBIfam" id="TIGR00262">
    <property type="entry name" value="trpA"/>
    <property type="match status" value="1"/>
</dbReference>
<dbReference type="PANTHER" id="PTHR43406:SF1">
    <property type="entry name" value="TRYPTOPHAN SYNTHASE ALPHA CHAIN, CHLOROPLASTIC"/>
    <property type="match status" value="1"/>
</dbReference>
<dbReference type="PANTHER" id="PTHR43406">
    <property type="entry name" value="TRYPTOPHAN SYNTHASE, ALPHA CHAIN"/>
    <property type="match status" value="1"/>
</dbReference>
<dbReference type="Pfam" id="PF00290">
    <property type="entry name" value="Trp_syntA"/>
    <property type="match status" value="1"/>
</dbReference>
<dbReference type="SUPFAM" id="SSF51366">
    <property type="entry name" value="Ribulose-phoshate binding barrel"/>
    <property type="match status" value="1"/>
</dbReference>
<dbReference type="PROSITE" id="PS00167">
    <property type="entry name" value="TRP_SYNTHASE_ALPHA"/>
    <property type="match status" value="1"/>
</dbReference>
<gene>
    <name evidence="1" type="primary">trpA</name>
    <name type="ordered locus">Caul_4977</name>
</gene>
<accession>B0T694</accession>
<name>TRPA_CAUSK</name>
<proteinExistence type="inferred from homology"/>
<organism>
    <name type="scientific">Caulobacter sp. (strain K31)</name>
    <dbReference type="NCBI Taxonomy" id="366602"/>
    <lineage>
        <taxon>Bacteria</taxon>
        <taxon>Pseudomonadati</taxon>
        <taxon>Pseudomonadota</taxon>
        <taxon>Alphaproteobacteria</taxon>
        <taxon>Caulobacterales</taxon>
        <taxon>Caulobacteraceae</taxon>
        <taxon>Caulobacter</taxon>
    </lineage>
</organism>
<protein>
    <recommendedName>
        <fullName evidence="1">Tryptophan synthase alpha chain</fullName>
        <ecNumber evidence="1">4.2.1.20</ecNumber>
    </recommendedName>
</protein>